<keyword id="KW-0028">Amino-acid biosynthesis</keyword>
<keyword id="KW-0963">Cytoplasm</keyword>
<keyword id="KW-0368">Histidine biosynthesis</keyword>
<keyword id="KW-0378">Hydrolase</keyword>
<keyword id="KW-0460">Magnesium</keyword>
<keyword id="KW-0479">Metal-binding</keyword>
<keyword id="KW-0862">Zinc</keyword>
<accession>Q11JM5</accession>
<gene>
    <name evidence="1" type="primary">hisI</name>
    <name type="ordered locus">Meso_1003</name>
</gene>
<comment type="function">
    <text evidence="1">Catalyzes the hydrolysis of the adenine ring of phosphoribosyl-AMP.</text>
</comment>
<comment type="catalytic activity">
    <reaction evidence="1">
        <text>1-(5-phospho-beta-D-ribosyl)-5'-AMP + H2O = 1-(5-phospho-beta-D-ribosyl)-5-[(5-phospho-beta-D-ribosylamino)methylideneamino]imidazole-4-carboxamide</text>
        <dbReference type="Rhea" id="RHEA:20049"/>
        <dbReference type="ChEBI" id="CHEBI:15377"/>
        <dbReference type="ChEBI" id="CHEBI:58435"/>
        <dbReference type="ChEBI" id="CHEBI:59457"/>
        <dbReference type="EC" id="3.5.4.19"/>
    </reaction>
</comment>
<comment type="cofactor">
    <cofactor evidence="1">
        <name>Mg(2+)</name>
        <dbReference type="ChEBI" id="CHEBI:18420"/>
    </cofactor>
    <text evidence="1">Binds 1 Mg(2+) ion per subunit.</text>
</comment>
<comment type="cofactor">
    <cofactor evidence="1">
        <name>Zn(2+)</name>
        <dbReference type="ChEBI" id="CHEBI:29105"/>
    </cofactor>
    <text evidence="1">Binds 1 zinc ion per subunit.</text>
</comment>
<comment type="pathway">
    <text evidence="1">Amino-acid biosynthesis; L-histidine biosynthesis; L-histidine from 5-phospho-alpha-D-ribose 1-diphosphate: step 3/9.</text>
</comment>
<comment type="subunit">
    <text evidence="1">Homodimer.</text>
</comment>
<comment type="subcellular location">
    <subcellularLocation>
        <location evidence="1">Cytoplasm</location>
    </subcellularLocation>
</comment>
<comment type="similarity">
    <text evidence="1">Belongs to the PRA-CH family.</text>
</comment>
<name>HIS3_CHESB</name>
<feature type="chain" id="PRO_0000319698" description="Phosphoribosyl-AMP cyclohydrolase">
    <location>
        <begin position="1"/>
        <end position="139"/>
    </location>
</feature>
<feature type="binding site" evidence="1">
    <location>
        <position position="95"/>
    </location>
    <ligand>
        <name>Mg(2+)</name>
        <dbReference type="ChEBI" id="CHEBI:18420"/>
    </ligand>
</feature>
<feature type="binding site" evidence="1">
    <location>
        <position position="96"/>
    </location>
    <ligand>
        <name>Zn(2+)</name>
        <dbReference type="ChEBI" id="CHEBI:29105"/>
        <note>ligand shared between dimeric partners</note>
    </ligand>
</feature>
<feature type="binding site" evidence="1">
    <location>
        <position position="97"/>
    </location>
    <ligand>
        <name>Mg(2+)</name>
        <dbReference type="ChEBI" id="CHEBI:18420"/>
    </ligand>
</feature>
<feature type="binding site" evidence="1">
    <location>
        <position position="99"/>
    </location>
    <ligand>
        <name>Mg(2+)</name>
        <dbReference type="ChEBI" id="CHEBI:18420"/>
    </ligand>
</feature>
<feature type="binding site" evidence="1">
    <location>
        <position position="114"/>
    </location>
    <ligand>
        <name>Zn(2+)</name>
        <dbReference type="ChEBI" id="CHEBI:29105"/>
        <note>ligand shared between dimeric partners</note>
    </ligand>
</feature>
<feature type="binding site" evidence="1">
    <location>
        <position position="121"/>
    </location>
    <ligand>
        <name>Zn(2+)</name>
        <dbReference type="ChEBI" id="CHEBI:29105"/>
        <note>ligand shared between dimeric partners</note>
    </ligand>
</feature>
<evidence type="ECO:0000255" key="1">
    <source>
        <dbReference type="HAMAP-Rule" id="MF_01021"/>
    </source>
</evidence>
<proteinExistence type="inferred from homology"/>
<reference key="1">
    <citation type="submission" date="2006-06" db="EMBL/GenBank/DDBJ databases">
        <title>Complete sequence of chromosome of Mesorhizobium sp. BNC1.</title>
        <authorList>
            <consortium name="US DOE Joint Genome Institute"/>
            <person name="Copeland A."/>
            <person name="Lucas S."/>
            <person name="Lapidus A."/>
            <person name="Barry K."/>
            <person name="Detter J.C."/>
            <person name="Glavina del Rio T."/>
            <person name="Hammon N."/>
            <person name="Israni S."/>
            <person name="Dalin E."/>
            <person name="Tice H."/>
            <person name="Pitluck S."/>
            <person name="Chertkov O."/>
            <person name="Brettin T."/>
            <person name="Bruce D."/>
            <person name="Han C."/>
            <person name="Tapia R."/>
            <person name="Gilna P."/>
            <person name="Schmutz J."/>
            <person name="Larimer F."/>
            <person name="Land M."/>
            <person name="Hauser L."/>
            <person name="Kyrpides N."/>
            <person name="Mikhailova N."/>
            <person name="Richardson P."/>
        </authorList>
    </citation>
    <scope>NUCLEOTIDE SEQUENCE [LARGE SCALE GENOMIC DNA]</scope>
    <source>
        <strain>BNC1</strain>
    </source>
</reference>
<organism>
    <name type="scientific">Chelativorans sp. (strain BNC1)</name>
    <dbReference type="NCBI Taxonomy" id="266779"/>
    <lineage>
        <taxon>Bacteria</taxon>
        <taxon>Pseudomonadati</taxon>
        <taxon>Pseudomonadota</taxon>
        <taxon>Alphaproteobacteria</taxon>
        <taxon>Hyphomicrobiales</taxon>
        <taxon>Phyllobacteriaceae</taxon>
        <taxon>Chelativorans</taxon>
    </lineage>
</organism>
<sequence length="139" mass="15066">MQASELRFAPPSADKSALEEGRLFTPRFDANGLITAVVTDAGDGTLLMVAHMNAEALAKTLETGIAHYWSRSRSSLWKKGETSGNLQHVESISTDCDQDAVLLKVRVGGEGATCHTGRRSCFYRNVKVEDGRPILTENG</sequence>
<protein>
    <recommendedName>
        <fullName evidence="1">Phosphoribosyl-AMP cyclohydrolase</fullName>
        <shortName evidence="1">PRA-CH</shortName>
        <ecNumber evidence="1">3.5.4.19</ecNumber>
    </recommendedName>
</protein>
<dbReference type="EC" id="3.5.4.19" evidence="1"/>
<dbReference type="EMBL" id="CP000390">
    <property type="protein sequence ID" value="ABG62400.1"/>
    <property type="molecule type" value="Genomic_DNA"/>
</dbReference>
<dbReference type="SMR" id="Q11JM5"/>
<dbReference type="STRING" id="266779.Meso_1003"/>
<dbReference type="KEGG" id="mes:Meso_1003"/>
<dbReference type="eggNOG" id="COG0139">
    <property type="taxonomic scope" value="Bacteria"/>
</dbReference>
<dbReference type="HOGENOM" id="CLU_048577_5_0_5"/>
<dbReference type="OrthoDB" id="9795769at2"/>
<dbReference type="UniPathway" id="UPA00031">
    <property type="reaction ID" value="UER00008"/>
</dbReference>
<dbReference type="GO" id="GO:0005737">
    <property type="term" value="C:cytoplasm"/>
    <property type="evidence" value="ECO:0007669"/>
    <property type="project" value="UniProtKB-SubCell"/>
</dbReference>
<dbReference type="GO" id="GO:0000287">
    <property type="term" value="F:magnesium ion binding"/>
    <property type="evidence" value="ECO:0007669"/>
    <property type="project" value="UniProtKB-UniRule"/>
</dbReference>
<dbReference type="GO" id="GO:0004635">
    <property type="term" value="F:phosphoribosyl-AMP cyclohydrolase activity"/>
    <property type="evidence" value="ECO:0007669"/>
    <property type="project" value="UniProtKB-UniRule"/>
</dbReference>
<dbReference type="GO" id="GO:0008270">
    <property type="term" value="F:zinc ion binding"/>
    <property type="evidence" value="ECO:0007669"/>
    <property type="project" value="UniProtKB-UniRule"/>
</dbReference>
<dbReference type="GO" id="GO:0000105">
    <property type="term" value="P:L-histidine biosynthetic process"/>
    <property type="evidence" value="ECO:0007669"/>
    <property type="project" value="UniProtKB-UniRule"/>
</dbReference>
<dbReference type="FunFam" id="3.10.20.810:FF:000001">
    <property type="entry name" value="Histidine biosynthesis bifunctional protein HisIE"/>
    <property type="match status" value="1"/>
</dbReference>
<dbReference type="Gene3D" id="4.10.80.70">
    <property type="match status" value="1"/>
</dbReference>
<dbReference type="Gene3D" id="3.10.20.810">
    <property type="entry name" value="Phosphoribosyl-AMP cyclohydrolase"/>
    <property type="match status" value="1"/>
</dbReference>
<dbReference type="HAMAP" id="MF_01021">
    <property type="entry name" value="HisI"/>
    <property type="match status" value="1"/>
</dbReference>
<dbReference type="InterPro" id="IPR026660">
    <property type="entry name" value="PRA-CH"/>
</dbReference>
<dbReference type="InterPro" id="IPR002496">
    <property type="entry name" value="PRib_AMP_CycHydrolase_dom"/>
</dbReference>
<dbReference type="InterPro" id="IPR038019">
    <property type="entry name" value="PRib_AMP_CycHydrolase_sf"/>
</dbReference>
<dbReference type="NCBIfam" id="NF000768">
    <property type="entry name" value="PRK00051.1"/>
    <property type="match status" value="1"/>
</dbReference>
<dbReference type="PANTHER" id="PTHR42945">
    <property type="entry name" value="HISTIDINE BIOSYNTHESIS BIFUNCTIONAL PROTEIN"/>
    <property type="match status" value="1"/>
</dbReference>
<dbReference type="PANTHER" id="PTHR42945:SF1">
    <property type="entry name" value="HISTIDINE BIOSYNTHESIS BIFUNCTIONAL PROTEIN HIS7"/>
    <property type="match status" value="1"/>
</dbReference>
<dbReference type="Pfam" id="PF01502">
    <property type="entry name" value="PRA-CH"/>
    <property type="match status" value="1"/>
</dbReference>
<dbReference type="SUPFAM" id="SSF141734">
    <property type="entry name" value="HisI-like"/>
    <property type="match status" value="1"/>
</dbReference>